<comment type="interaction">
    <interactant intactId="EBI-10268158">
        <id>Q8N9E0</id>
    </interactant>
    <interactant intactId="EBI-2803601">
        <id>Q9NRZ7</id>
        <label>AGPAT3</label>
    </interactant>
    <organismsDiffer>false</organismsDiffer>
    <experiments>3</experiments>
</comment>
<comment type="interaction">
    <interactant intactId="EBI-10268158">
        <id>Q8N9E0</id>
    </interactant>
    <interactant intactId="EBI-10181188">
        <id>Q8N7W2-2</id>
        <label>BEND7</label>
    </interactant>
    <organismsDiffer>false</organismsDiffer>
    <experiments>3</experiments>
</comment>
<comment type="interaction">
    <interactant intactId="EBI-10268158">
        <id>Q8N9E0</id>
    </interactant>
    <interactant intactId="EBI-2836773">
        <id>Q9UK58</id>
        <label>CCNL1</label>
    </interactant>
    <organismsDiffer>false</organismsDiffer>
    <experiments>3</experiments>
</comment>
<comment type="interaction">
    <interactant intactId="EBI-10268158">
        <id>Q8N9E0</id>
    </interactant>
    <interactant intactId="EBI-739624">
        <id>Q8NHQ1</id>
        <label>CEP70</label>
    </interactant>
    <organismsDiffer>false</organismsDiffer>
    <experiments>6</experiments>
</comment>
<comment type="interaction">
    <interactant intactId="EBI-10268158">
        <id>Q8N9E0</id>
    </interactant>
    <interactant intactId="EBI-347804">
        <id>P68400</id>
        <label>CSNK2A1</label>
    </interactant>
    <organismsDiffer>false</organismsDiffer>
    <experiments>7</experiments>
</comment>
<comment type="interaction">
    <interactant intactId="EBI-10268158">
        <id>Q8N9E0</id>
    </interactant>
    <interactant intactId="EBI-12051833">
        <id>Q5HYN5</id>
        <label>CT45A1</label>
    </interactant>
    <organismsDiffer>false</organismsDiffer>
    <experiments>3</experiments>
</comment>
<comment type="interaction">
    <interactant intactId="EBI-10268158">
        <id>Q8N9E0</id>
    </interactant>
    <interactant intactId="EBI-12142839">
        <id>U3KQK0</id>
        <label>H2BC15</label>
    </interactant>
    <organismsDiffer>false</organismsDiffer>
    <experiments>5</experiments>
</comment>
<comment type="interaction">
    <interactant intactId="EBI-10268158">
        <id>Q8N9E0</id>
    </interactant>
    <interactant intactId="EBI-2868511">
        <id>O75367</id>
        <label>MACROH2A1</label>
    </interactant>
    <organismsDiffer>false</organismsDiffer>
    <experiments>3</experiments>
</comment>
<comment type="interaction">
    <interactant intactId="EBI-10268158">
        <id>Q8N9E0</id>
    </interactant>
    <interactant intactId="EBI-3922608">
        <id>Q9P0M6</id>
        <label>MACROH2A2</label>
    </interactant>
    <organismsDiffer>false</organismsDiffer>
    <experiments>3</experiments>
</comment>
<comment type="interaction">
    <interactant intactId="EBI-10268158">
        <id>Q8N9E0</id>
    </interactant>
    <interactant intactId="EBI-742459">
        <id>Q9BU76</id>
        <label>MMTAG2</label>
    </interactant>
    <organismsDiffer>false</organismsDiffer>
    <experiments>3</experiments>
</comment>
<comment type="interaction">
    <interactant intactId="EBI-10268158">
        <id>Q8N9E0</id>
    </interactant>
    <interactant intactId="EBI-3920396">
        <id>Q6ZUT1</id>
        <label>NKAPD1</label>
    </interactant>
    <organismsDiffer>false</organismsDiffer>
    <experiments>3</experiments>
</comment>
<comment type="interaction">
    <interactant intactId="EBI-10268158">
        <id>Q8N9E0</id>
    </interactant>
    <interactant intactId="EBI-780467">
        <id>O75052</id>
        <label>NOS1AP</label>
    </interactant>
    <organismsDiffer>false</organismsDiffer>
    <experiments>5</experiments>
</comment>
<comment type="interaction">
    <interactant intactId="EBI-10268158">
        <id>Q8N9E0</id>
    </interactant>
    <interactant intactId="EBI-740924">
        <id>Q9NZ81</id>
        <label>PRR13</label>
    </interactant>
    <organismsDiffer>false</organismsDiffer>
    <experiments>3</experiments>
</comment>
<comment type="interaction">
    <interactant intactId="EBI-10268158">
        <id>Q8N9E0</id>
    </interactant>
    <interactant intactId="EBI-7704044">
        <id>Q9Y388</id>
        <label>RBMX2</label>
    </interactant>
    <organismsDiffer>false</organismsDiffer>
    <experiments>3</experiments>
</comment>
<comment type="interaction">
    <interactant intactId="EBI-10268158">
        <id>Q8N9E0</id>
    </interactant>
    <interactant intactId="EBI-12002474">
        <id>Q2KHN1</id>
        <label>RNF151</label>
    </interactant>
    <organismsDiffer>false</organismsDiffer>
    <experiments>3</experiments>
</comment>
<comment type="interaction">
    <interactant intactId="EBI-10268158">
        <id>Q8N9E0</id>
    </interactant>
    <interactant intactId="EBI-742426">
        <id>Q9H190</id>
        <label>SDCBP2</label>
    </interactant>
    <organismsDiffer>false</organismsDiffer>
    <experiments>9</experiments>
</comment>
<comment type="interaction">
    <interactant intactId="EBI-10268158">
        <id>Q8N9E0</id>
    </interactant>
    <interactant intactId="EBI-745680">
        <id>Q96MF2</id>
        <label>STAC3</label>
    </interactant>
    <organismsDiffer>false</organismsDiffer>
    <experiments>6</experiments>
</comment>
<comment type="interaction">
    <interactant intactId="EBI-10268158">
        <id>Q8N9E0</id>
    </interactant>
    <interactant intactId="EBI-741515">
        <id>Q9NVV9</id>
        <label>THAP1</label>
    </interactant>
    <organismsDiffer>false</organismsDiffer>
    <experiments>6</experiments>
</comment>
<comment type="interaction">
    <interactant intactId="EBI-10268158">
        <id>Q8N9E0</id>
    </interactant>
    <interactant intactId="EBI-740098">
        <id>P36406</id>
        <label>TRIM23</label>
    </interactant>
    <organismsDiffer>false</organismsDiffer>
    <experiments>6</experiments>
</comment>
<comment type="similarity">
    <text evidence="2">Belongs to the FAM133 family.</text>
</comment>
<organism>
    <name type="scientific">Homo sapiens</name>
    <name type="common">Human</name>
    <dbReference type="NCBI Taxonomy" id="9606"/>
    <lineage>
        <taxon>Eukaryota</taxon>
        <taxon>Metazoa</taxon>
        <taxon>Chordata</taxon>
        <taxon>Craniata</taxon>
        <taxon>Vertebrata</taxon>
        <taxon>Euteleostomi</taxon>
        <taxon>Mammalia</taxon>
        <taxon>Eutheria</taxon>
        <taxon>Euarchontoglires</taxon>
        <taxon>Primates</taxon>
        <taxon>Haplorrhini</taxon>
        <taxon>Catarrhini</taxon>
        <taxon>Hominidae</taxon>
        <taxon>Homo</taxon>
    </lineage>
</organism>
<name>F133A_HUMAN</name>
<reference key="1">
    <citation type="journal article" date="2004" name="Nat. Genet.">
        <title>Complete sequencing and characterization of 21,243 full-length human cDNAs.</title>
        <authorList>
            <person name="Ota T."/>
            <person name="Suzuki Y."/>
            <person name="Nishikawa T."/>
            <person name="Otsuki T."/>
            <person name="Sugiyama T."/>
            <person name="Irie R."/>
            <person name="Wakamatsu A."/>
            <person name="Hayashi K."/>
            <person name="Sato H."/>
            <person name="Nagai K."/>
            <person name="Kimura K."/>
            <person name="Makita H."/>
            <person name="Sekine M."/>
            <person name="Obayashi M."/>
            <person name="Nishi T."/>
            <person name="Shibahara T."/>
            <person name="Tanaka T."/>
            <person name="Ishii S."/>
            <person name="Yamamoto J."/>
            <person name="Saito K."/>
            <person name="Kawai Y."/>
            <person name="Isono Y."/>
            <person name="Nakamura Y."/>
            <person name="Nagahari K."/>
            <person name="Murakami K."/>
            <person name="Yasuda T."/>
            <person name="Iwayanagi T."/>
            <person name="Wagatsuma M."/>
            <person name="Shiratori A."/>
            <person name="Sudo H."/>
            <person name="Hosoiri T."/>
            <person name="Kaku Y."/>
            <person name="Kodaira H."/>
            <person name="Kondo H."/>
            <person name="Sugawara M."/>
            <person name="Takahashi M."/>
            <person name="Kanda K."/>
            <person name="Yokoi T."/>
            <person name="Furuya T."/>
            <person name="Kikkawa E."/>
            <person name="Omura Y."/>
            <person name="Abe K."/>
            <person name="Kamihara K."/>
            <person name="Katsuta N."/>
            <person name="Sato K."/>
            <person name="Tanikawa M."/>
            <person name="Yamazaki M."/>
            <person name="Ninomiya K."/>
            <person name="Ishibashi T."/>
            <person name="Yamashita H."/>
            <person name="Murakawa K."/>
            <person name="Fujimori K."/>
            <person name="Tanai H."/>
            <person name="Kimata M."/>
            <person name="Watanabe M."/>
            <person name="Hiraoka S."/>
            <person name="Chiba Y."/>
            <person name="Ishida S."/>
            <person name="Ono Y."/>
            <person name="Takiguchi S."/>
            <person name="Watanabe S."/>
            <person name="Yosida M."/>
            <person name="Hotuta T."/>
            <person name="Kusano J."/>
            <person name="Kanehori K."/>
            <person name="Takahashi-Fujii A."/>
            <person name="Hara H."/>
            <person name="Tanase T.-O."/>
            <person name="Nomura Y."/>
            <person name="Togiya S."/>
            <person name="Komai F."/>
            <person name="Hara R."/>
            <person name="Takeuchi K."/>
            <person name="Arita M."/>
            <person name="Imose N."/>
            <person name="Musashino K."/>
            <person name="Yuuki H."/>
            <person name="Oshima A."/>
            <person name="Sasaki N."/>
            <person name="Aotsuka S."/>
            <person name="Yoshikawa Y."/>
            <person name="Matsunawa H."/>
            <person name="Ichihara T."/>
            <person name="Shiohata N."/>
            <person name="Sano S."/>
            <person name="Moriya S."/>
            <person name="Momiyama H."/>
            <person name="Satoh N."/>
            <person name="Takami S."/>
            <person name="Terashima Y."/>
            <person name="Suzuki O."/>
            <person name="Nakagawa S."/>
            <person name="Senoh A."/>
            <person name="Mizoguchi H."/>
            <person name="Goto Y."/>
            <person name="Shimizu F."/>
            <person name="Wakebe H."/>
            <person name="Hishigaki H."/>
            <person name="Watanabe T."/>
            <person name="Sugiyama A."/>
            <person name="Takemoto M."/>
            <person name="Kawakami B."/>
            <person name="Yamazaki M."/>
            <person name="Watanabe K."/>
            <person name="Kumagai A."/>
            <person name="Itakura S."/>
            <person name="Fukuzumi Y."/>
            <person name="Fujimori Y."/>
            <person name="Komiyama M."/>
            <person name="Tashiro H."/>
            <person name="Tanigami A."/>
            <person name="Fujiwara T."/>
            <person name="Ono T."/>
            <person name="Yamada K."/>
            <person name="Fujii Y."/>
            <person name="Ozaki K."/>
            <person name="Hirao M."/>
            <person name="Ohmori Y."/>
            <person name="Kawabata A."/>
            <person name="Hikiji T."/>
            <person name="Kobatake N."/>
            <person name="Inagaki H."/>
            <person name="Ikema Y."/>
            <person name="Okamoto S."/>
            <person name="Okitani R."/>
            <person name="Kawakami T."/>
            <person name="Noguchi S."/>
            <person name="Itoh T."/>
            <person name="Shigeta K."/>
            <person name="Senba T."/>
            <person name="Matsumura K."/>
            <person name="Nakajima Y."/>
            <person name="Mizuno T."/>
            <person name="Morinaga M."/>
            <person name="Sasaki M."/>
            <person name="Togashi T."/>
            <person name="Oyama M."/>
            <person name="Hata H."/>
            <person name="Watanabe M."/>
            <person name="Komatsu T."/>
            <person name="Mizushima-Sugano J."/>
            <person name="Satoh T."/>
            <person name="Shirai Y."/>
            <person name="Takahashi Y."/>
            <person name="Nakagawa K."/>
            <person name="Okumura K."/>
            <person name="Nagase T."/>
            <person name="Nomura N."/>
            <person name="Kikuchi H."/>
            <person name="Masuho Y."/>
            <person name="Yamashita R."/>
            <person name="Nakai K."/>
            <person name="Yada T."/>
            <person name="Nakamura Y."/>
            <person name="Ohara O."/>
            <person name="Isogai T."/>
            <person name="Sugano S."/>
        </authorList>
    </citation>
    <scope>NUCLEOTIDE SEQUENCE [LARGE SCALE MRNA]</scope>
    <source>
        <tissue>Hippocampus</tissue>
    </source>
</reference>
<reference key="2">
    <citation type="journal article" date="2005" name="Nature">
        <title>The DNA sequence of the human X chromosome.</title>
        <authorList>
            <person name="Ross M.T."/>
            <person name="Grafham D.V."/>
            <person name="Coffey A.J."/>
            <person name="Scherer S."/>
            <person name="McLay K."/>
            <person name="Muzny D."/>
            <person name="Platzer M."/>
            <person name="Howell G.R."/>
            <person name="Burrows C."/>
            <person name="Bird C.P."/>
            <person name="Frankish A."/>
            <person name="Lovell F.L."/>
            <person name="Howe K.L."/>
            <person name="Ashurst J.L."/>
            <person name="Fulton R.S."/>
            <person name="Sudbrak R."/>
            <person name="Wen G."/>
            <person name="Jones M.C."/>
            <person name="Hurles M.E."/>
            <person name="Andrews T.D."/>
            <person name="Scott C.E."/>
            <person name="Searle S."/>
            <person name="Ramser J."/>
            <person name="Whittaker A."/>
            <person name="Deadman R."/>
            <person name="Carter N.P."/>
            <person name="Hunt S.E."/>
            <person name="Chen R."/>
            <person name="Cree A."/>
            <person name="Gunaratne P."/>
            <person name="Havlak P."/>
            <person name="Hodgson A."/>
            <person name="Metzker M.L."/>
            <person name="Richards S."/>
            <person name="Scott G."/>
            <person name="Steffen D."/>
            <person name="Sodergren E."/>
            <person name="Wheeler D.A."/>
            <person name="Worley K.C."/>
            <person name="Ainscough R."/>
            <person name="Ambrose K.D."/>
            <person name="Ansari-Lari M.A."/>
            <person name="Aradhya S."/>
            <person name="Ashwell R.I."/>
            <person name="Babbage A.K."/>
            <person name="Bagguley C.L."/>
            <person name="Ballabio A."/>
            <person name="Banerjee R."/>
            <person name="Barker G.E."/>
            <person name="Barlow K.F."/>
            <person name="Barrett I.P."/>
            <person name="Bates K.N."/>
            <person name="Beare D.M."/>
            <person name="Beasley H."/>
            <person name="Beasley O."/>
            <person name="Beck A."/>
            <person name="Bethel G."/>
            <person name="Blechschmidt K."/>
            <person name="Brady N."/>
            <person name="Bray-Allen S."/>
            <person name="Bridgeman A.M."/>
            <person name="Brown A.J."/>
            <person name="Brown M.J."/>
            <person name="Bonnin D."/>
            <person name="Bruford E.A."/>
            <person name="Buhay C."/>
            <person name="Burch P."/>
            <person name="Burford D."/>
            <person name="Burgess J."/>
            <person name="Burrill W."/>
            <person name="Burton J."/>
            <person name="Bye J.M."/>
            <person name="Carder C."/>
            <person name="Carrel L."/>
            <person name="Chako J."/>
            <person name="Chapman J.C."/>
            <person name="Chavez D."/>
            <person name="Chen E."/>
            <person name="Chen G."/>
            <person name="Chen Y."/>
            <person name="Chen Z."/>
            <person name="Chinault C."/>
            <person name="Ciccodicola A."/>
            <person name="Clark S.Y."/>
            <person name="Clarke G."/>
            <person name="Clee C.M."/>
            <person name="Clegg S."/>
            <person name="Clerc-Blankenburg K."/>
            <person name="Clifford K."/>
            <person name="Cobley V."/>
            <person name="Cole C.G."/>
            <person name="Conquer J.S."/>
            <person name="Corby N."/>
            <person name="Connor R.E."/>
            <person name="David R."/>
            <person name="Davies J."/>
            <person name="Davis C."/>
            <person name="Davis J."/>
            <person name="Delgado O."/>
            <person name="Deshazo D."/>
            <person name="Dhami P."/>
            <person name="Ding Y."/>
            <person name="Dinh H."/>
            <person name="Dodsworth S."/>
            <person name="Draper H."/>
            <person name="Dugan-Rocha S."/>
            <person name="Dunham A."/>
            <person name="Dunn M."/>
            <person name="Durbin K.J."/>
            <person name="Dutta I."/>
            <person name="Eades T."/>
            <person name="Ellwood M."/>
            <person name="Emery-Cohen A."/>
            <person name="Errington H."/>
            <person name="Evans K.L."/>
            <person name="Faulkner L."/>
            <person name="Francis F."/>
            <person name="Frankland J."/>
            <person name="Fraser A.E."/>
            <person name="Galgoczy P."/>
            <person name="Gilbert J."/>
            <person name="Gill R."/>
            <person name="Gloeckner G."/>
            <person name="Gregory S.G."/>
            <person name="Gribble S."/>
            <person name="Griffiths C."/>
            <person name="Grocock R."/>
            <person name="Gu Y."/>
            <person name="Gwilliam R."/>
            <person name="Hamilton C."/>
            <person name="Hart E.A."/>
            <person name="Hawes A."/>
            <person name="Heath P.D."/>
            <person name="Heitmann K."/>
            <person name="Hennig S."/>
            <person name="Hernandez J."/>
            <person name="Hinzmann B."/>
            <person name="Ho S."/>
            <person name="Hoffs M."/>
            <person name="Howden P.J."/>
            <person name="Huckle E.J."/>
            <person name="Hume J."/>
            <person name="Hunt P.J."/>
            <person name="Hunt A.R."/>
            <person name="Isherwood J."/>
            <person name="Jacob L."/>
            <person name="Johnson D."/>
            <person name="Jones S."/>
            <person name="de Jong P.J."/>
            <person name="Joseph S.S."/>
            <person name="Keenan S."/>
            <person name="Kelly S."/>
            <person name="Kershaw J.K."/>
            <person name="Khan Z."/>
            <person name="Kioschis P."/>
            <person name="Klages S."/>
            <person name="Knights A.J."/>
            <person name="Kosiura A."/>
            <person name="Kovar-Smith C."/>
            <person name="Laird G.K."/>
            <person name="Langford C."/>
            <person name="Lawlor S."/>
            <person name="Leversha M."/>
            <person name="Lewis L."/>
            <person name="Liu W."/>
            <person name="Lloyd C."/>
            <person name="Lloyd D.M."/>
            <person name="Loulseged H."/>
            <person name="Loveland J.E."/>
            <person name="Lovell J.D."/>
            <person name="Lozado R."/>
            <person name="Lu J."/>
            <person name="Lyne R."/>
            <person name="Ma J."/>
            <person name="Maheshwari M."/>
            <person name="Matthews L.H."/>
            <person name="McDowall J."/>
            <person name="McLaren S."/>
            <person name="McMurray A."/>
            <person name="Meidl P."/>
            <person name="Meitinger T."/>
            <person name="Milne S."/>
            <person name="Miner G."/>
            <person name="Mistry S.L."/>
            <person name="Morgan M."/>
            <person name="Morris S."/>
            <person name="Mueller I."/>
            <person name="Mullikin J.C."/>
            <person name="Nguyen N."/>
            <person name="Nordsiek G."/>
            <person name="Nyakatura G."/>
            <person name="O'dell C.N."/>
            <person name="Okwuonu G."/>
            <person name="Palmer S."/>
            <person name="Pandian R."/>
            <person name="Parker D."/>
            <person name="Parrish J."/>
            <person name="Pasternak S."/>
            <person name="Patel D."/>
            <person name="Pearce A.V."/>
            <person name="Pearson D.M."/>
            <person name="Pelan S.E."/>
            <person name="Perez L."/>
            <person name="Porter K.M."/>
            <person name="Ramsey Y."/>
            <person name="Reichwald K."/>
            <person name="Rhodes S."/>
            <person name="Ridler K.A."/>
            <person name="Schlessinger D."/>
            <person name="Schueler M.G."/>
            <person name="Sehra H.K."/>
            <person name="Shaw-Smith C."/>
            <person name="Shen H."/>
            <person name="Sheridan E.M."/>
            <person name="Shownkeen R."/>
            <person name="Skuce C.D."/>
            <person name="Smith M.L."/>
            <person name="Sotheran E.C."/>
            <person name="Steingruber H.E."/>
            <person name="Steward C.A."/>
            <person name="Storey R."/>
            <person name="Swann R.M."/>
            <person name="Swarbreck D."/>
            <person name="Tabor P.E."/>
            <person name="Taudien S."/>
            <person name="Taylor T."/>
            <person name="Teague B."/>
            <person name="Thomas K."/>
            <person name="Thorpe A."/>
            <person name="Timms K."/>
            <person name="Tracey A."/>
            <person name="Trevanion S."/>
            <person name="Tromans A.C."/>
            <person name="d'Urso M."/>
            <person name="Verduzco D."/>
            <person name="Villasana D."/>
            <person name="Waldron L."/>
            <person name="Wall M."/>
            <person name="Wang Q."/>
            <person name="Warren J."/>
            <person name="Warry G.L."/>
            <person name="Wei X."/>
            <person name="West A."/>
            <person name="Whitehead S.L."/>
            <person name="Whiteley M.N."/>
            <person name="Wilkinson J.E."/>
            <person name="Willey D.L."/>
            <person name="Williams G."/>
            <person name="Williams L."/>
            <person name="Williamson A."/>
            <person name="Williamson H."/>
            <person name="Wilming L."/>
            <person name="Woodmansey R.L."/>
            <person name="Wray P.W."/>
            <person name="Yen J."/>
            <person name="Zhang J."/>
            <person name="Zhou J."/>
            <person name="Zoghbi H."/>
            <person name="Zorilla S."/>
            <person name="Buck D."/>
            <person name="Reinhardt R."/>
            <person name="Poustka A."/>
            <person name="Rosenthal A."/>
            <person name="Lehrach H."/>
            <person name="Meindl A."/>
            <person name="Minx P.J."/>
            <person name="Hillier L.W."/>
            <person name="Willard H.F."/>
            <person name="Wilson R.K."/>
            <person name="Waterston R.H."/>
            <person name="Rice C.M."/>
            <person name="Vaudin M."/>
            <person name="Coulson A."/>
            <person name="Nelson D.L."/>
            <person name="Weinstock G."/>
            <person name="Sulston J.E."/>
            <person name="Durbin R.M."/>
            <person name="Hubbard T."/>
            <person name="Gibbs R.A."/>
            <person name="Beck S."/>
            <person name="Rogers J."/>
            <person name="Bentley D.R."/>
        </authorList>
    </citation>
    <scope>NUCLEOTIDE SEQUENCE [LARGE SCALE GENOMIC DNA]</scope>
</reference>
<reference key="3">
    <citation type="journal article" date="2004" name="Genome Res.">
        <title>The status, quality, and expansion of the NIH full-length cDNA project: the Mammalian Gene Collection (MGC).</title>
        <authorList>
            <consortium name="The MGC Project Team"/>
        </authorList>
    </citation>
    <scope>NUCLEOTIDE SEQUENCE [LARGE SCALE MRNA]</scope>
</reference>
<evidence type="ECO:0000256" key="1">
    <source>
        <dbReference type="SAM" id="MobiDB-lite"/>
    </source>
</evidence>
<evidence type="ECO:0000305" key="2"/>
<sequence length="248" mass="28941">MGKRDNRVAYMNPIAMARWRGPTQSVGPTIQDYLNRPRPTWEEVKKQLENKKTGSKALAEFEEKMNENWKKELEKSREKLLSGNESSSKKRERKKKRKKKSCRSSSSSSSSDSSSSSSDSEDEEKKQGKRRKKKKNRSYKSSQSSTHESESESKESVKKKKKSKDETEKEKDVRSLSKKRKKSYPDDKPLSSESSSESDYEEDVQAKKKRRCEEREQAKEKVKKKKKKQHKKHSKKKKKKSGSSHKSR</sequence>
<protein>
    <recommendedName>
        <fullName>Protein FAM133A</fullName>
    </recommendedName>
</protein>
<feature type="chain" id="PRO_0000287619" description="Protein FAM133A">
    <location>
        <begin position="1"/>
        <end position="248"/>
    </location>
</feature>
<feature type="region of interest" description="Disordered" evidence="1">
    <location>
        <begin position="68"/>
        <end position="248"/>
    </location>
</feature>
<feature type="compositionally biased region" description="Basic and acidic residues" evidence="1">
    <location>
        <begin position="68"/>
        <end position="80"/>
    </location>
</feature>
<feature type="compositionally biased region" description="Basic residues" evidence="1">
    <location>
        <begin position="90"/>
        <end position="102"/>
    </location>
</feature>
<feature type="compositionally biased region" description="Low complexity" evidence="1">
    <location>
        <begin position="103"/>
        <end position="118"/>
    </location>
</feature>
<feature type="compositionally biased region" description="Basic residues" evidence="1">
    <location>
        <begin position="127"/>
        <end position="138"/>
    </location>
</feature>
<feature type="compositionally biased region" description="Basic and acidic residues" evidence="1">
    <location>
        <begin position="147"/>
        <end position="156"/>
    </location>
</feature>
<feature type="compositionally biased region" description="Basic and acidic residues" evidence="1">
    <location>
        <begin position="163"/>
        <end position="175"/>
    </location>
</feature>
<feature type="compositionally biased region" description="Basic and acidic residues" evidence="1">
    <location>
        <begin position="211"/>
        <end position="220"/>
    </location>
</feature>
<feature type="compositionally biased region" description="Basic residues" evidence="1">
    <location>
        <begin position="221"/>
        <end position="248"/>
    </location>
</feature>
<feature type="sequence variant" id="VAR_053907" description="In dbSNP:rs34123774.">
    <original>E</original>
    <variation>K</variation>
    <location>
        <position position="67"/>
    </location>
</feature>
<gene>
    <name type="primary">FAM133A</name>
</gene>
<accession>Q8N9E0</accession>
<dbReference type="EMBL" id="AK094978">
    <property type="protein sequence ID" value="BAC04467.1"/>
    <property type="molecule type" value="mRNA"/>
</dbReference>
<dbReference type="EMBL" id="AL009173">
    <property type="status" value="NOT_ANNOTATED_CDS"/>
    <property type="molecule type" value="Genomic_DNA"/>
</dbReference>
<dbReference type="EMBL" id="BC113387">
    <property type="protein sequence ID" value="AAI13388.1"/>
    <property type="molecule type" value="mRNA"/>
</dbReference>
<dbReference type="EMBL" id="BC113385">
    <property type="protein sequence ID" value="AAI13386.1"/>
    <property type="molecule type" value="mRNA"/>
</dbReference>
<dbReference type="CCDS" id="CCDS14466.1"/>
<dbReference type="RefSeq" id="NP_001164580.1">
    <property type="nucleotide sequence ID" value="NM_001171109.2"/>
</dbReference>
<dbReference type="RefSeq" id="NP_001164581.1">
    <property type="nucleotide sequence ID" value="NM_001171110.2"/>
</dbReference>
<dbReference type="RefSeq" id="NP_001164582.1">
    <property type="nucleotide sequence ID" value="NM_001171111.2"/>
</dbReference>
<dbReference type="RefSeq" id="NP_775969.1">
    <property type="nucleotide sequence ID" value="NM_173698.3"/>
</dbReference>
<dbReference type="RefSeq" id="XP_006724704.1">
    <property type="nucleotide sequence ID" value="XM_006724641.4"/>
</dbReference>
<dbReference type="RefSeq" id="XP_011529227.1">
    <property type="nucleotide sequence ID" value="XM_011530925.3"/>
</dbReference>
<dbReference type="RefSeq" id="XP_011529228.1">
    <property type="nucleotide sequence ID" value="XM_011530926.4"/>
</dbReference>
<dbReference type="RefSeq" id="XP_011529229.1">
    <property type="nucleotide sequence ID" value="XM_011530927.3"/>
</dbReference>
<dbReference type="RefSeq" id="XP_011529230.1">
    <property type="nucleotide sequence ID" value="XM_011530928.2"/>
</dbReference>
<dbReference type="RefSeq" id="XP_011529231.1">
    <property type="nucleotide sequence ID" value="XM_011530929.2"/>
</dbReference>
<dbReference type="RefSeq" id="XP_011529233.1">
    <property type="nucleotide sequence ID" value="XM_011530931.3"/>
</dbReference>
<dbReference type="RefSeq" id="XP_016884943.1">
    <property type="nucleotide sequence ID" value="XM_017029454.2"/>
</dbReference>
<dbReference type="RefSeq" id="XP_016884944.1">
    <property type="nucleotide sequence ID" value="XM_017029455.2"/>
</dbReference>
<dbReference type="RefSeq" id="XP_016884945.1">
    <property type="nucleotide sequence ID" value="XM_017029456.2"/>
</dbReference>
<dbReference type="RefSeq" id="XP_054182877.1">
    <property type="nucleotide sequence ID" value="XM_054326902.1"/>
</dbReference>
<dbReference type="RefSeq" id="XP_054182878.1">
    <property type="nucleotide sequence ID" value="XM_054326903.1"/>
</dbReference>
<dbReference type="RefSeq" id="XP_054182879.1">
    <property type="nucleotide sequence ID" value="XM_054326904.1"/>
</dbReference>
<dbReference type="RefSeq" id="XP_054182880.1">
    <property type="nucleotide sequence ID" value="XM_054326905.1"/>
</dbReference>
<dbReference type="RefSeq" id="XP_054182881.1">
    <property type="nucleotide sequence ID" value="XM_054326906.1"/>
</dbReference>
<dbReference type="RefSeq" id="XP_054182882.1">
    <property type="nucleotide sequence ID" value="XM_054326907.1"/>
</dbReference>
<dbReference type="RefSeq" id="XP_054182883.1">
    <property type="nucleotide sequence ID" value="XM_054326908.1"/>
</dbReference>
<dbReference type="RefSeq" id="XP_054182884.1">
    <property type="nucleotide sequence ID" value="XM_054326909.1"/>
</dbReference>
<dbReference type="RefSeq" id="XP_054182885.1">
    <property type="nucleotide sequence ID" value="XM_054326910.1"/>
</dbReference>
<dbReference type="RefSeq" id="XP_054182886.1">
    <property type="nucleotide sequence ID" value="XM_054326911.1"/>
</dbReference>
<dbReference type="SMR" id="Q8N9E0"/>
<dbReference type="BioGRID" id="130395">
    <property type="interactions" value="90"/>
</dbReference>
<dbReference type="FunCoup" id="Q8N9E0">
    <property type="interactions" value="1"/>
</dbReference>
<dbReference type="IntAct" id="Q8N9E0">
    <property type="interactions" value="76"/>
</dbReference>
<dbReference type="STRING" id="9606.ENSP00000318974"/>
<dbReference type="GlyGen" id="Q8N9E0">
    <property type="glycosylation" value="1 site"/>
</dbReference>
<dbReference type="iPTMnet" id="Q8N9E0"/>
<dbReference type="PhosphoSitePlus" id="Q8N9E0"/>
<dbReference type="BioMuta" id="FAM133A"/>
<dbReference type="DMDM" id="74751120"/>
<dbReference type="jPOST" id="Q8N9E0"/>
<dbReference type="MassIVE" id="Q8N9E0"/>
<dbReference type="PaxDb" id="9606-ENSP00000318974"/>
<dbReference type="PeptideAtlas" id="Q8N9E0"/>
<dbReference type="ProteomicsDB" id="72524"/>
<dbReference type="Pumba" id="Q8N9E0"/>
<dbReference type="Antibodypedia" id="67595">
    <property type="antibodies" value="65 antibodies from 17 providers"/>
</dbReference>
<dbReference type="DNASU" id="286499"/>
<dbReference type="Ensembl" id="ENST00000322139.4">
    <property type="protein sequence ID" value="ENSP00000318974.4"/>
    <property type="gene ID" value="ENSG00000179083.7"/>
</dbReference>
<dbReference type="Ensembl" id="ENST00000332647.5">
    <property type="protein sequence ID" value="ENSP00000362169.1"/>
    <property type="gene ID" value="ENSG00000179083.7"/>
</dbReference>
<dbReference type="Ensembl" id="ENST00000683942.1">
    <property type="protein sequence ID" value="ENSP00000507109.1"/>
    <property type="gene ID" value="ENSG00000179083.7"/>
</dbReference>
<dbReference type="GeneID" id="286499"/>
<dbReference type="KEGG" id="hsa:286499"/>
<dbReference type="MANE-Select" id="ENST00000683942.1">
    <property type="protein sequence ID" value="ENSP00000507109.1"/>
    <property type="RefSeq nucleotide sequence ID" value="NM_001171109.2"/>
    <property type="RefSeq protein sequence ID" value="NP_001164580.1"/>
</dbReference>
<dbReference type="UCSC" id="uc004efr.3">
    <property type="organism name" value="human"/>
</dbReference>
<dbReference type="AGR" id="HGNC:26748"/>
<dbReference type="CTD" id="286499"/>
<dbReference type="DisGeNET" id="286499"/>
<dbReference type="GeneCards" id="FAM133A"/>
<dbReference type="HGNC" id="HGNC:26748">
    <property type="gene designation" value="FAM133A"/>
</dbReference>
<dbReference type="HPA" id="ENSG00000179083">
    <property type="expression patterns" value="Tissue enhanced (brain, testis)"/>
</dbReference>
<dbReference type="neXtProt" id="NX_Q8N9E0"/>
<dbReference type="OpenTargets" id="ENSG00000179083"/>
<dbReference type="PharmGKB" id="PA162386125"/>
<dbReference type="VEuPathDB" id="HostDB:ENSG00000179083"/>
<dbReference type="eggNOG" id="ENOG502RXMT">
    <property type="taxonomic scope" value="Eukaryota"/>
</dbReference>
<dbReference type="GeneTree" id="ENSGT00730000111097"/>
<dbReference type="HOGENOM" id="CLU_108741_0_0_1"/>
<dbReference type="InParanoid" id="Q8N9E0"/>
<dbReference type="OMA" id="KTGHRRH"/>
<dbReference type="OrthoDB" id="10065679at2759"/>
<dbReference type="PAN-GO" id="Q8N9E0">
    <property type="GO annotations" value="0 GO annotations based on evolutionary models"/>
</dbReference>
<dbReference type="PhylomeDB" id="Q8N9E0"/>
<dbReference type="TreeFam" id="TF350193"/>
<dbReference type="PathwayCommons" id="Q8N9E0"/>
<dbReference type="SignaLink" id="Q8N9E0"/>
<dbReference type="BioGRID-ORCS" id="286499">
    <property type="hits" value="47 hits in 758 CRISPR screens"/>
</dbReference>
<dbReference type="GenomeRNAi" id="286499"/>
<dbReference type="Pharos" id="Q8N9E0">
    <property type="development level" value="Tbio"/>
</dbReference>
<dbReference type="PRO" id="PR:Q8N9E0"/>
<dbReference type="Proteomes" id="UP000005640">
    <property type="component" value="Chromosome X"/>
</dbReference>
<dbReference type="RNAct" id="Q8N9E0">
    <property type="molecule type" value="protein"/>
</dbReference>
<dbReference type="Bgee" id="ENSG00000179083">
    <property type="expression patterns" value="Expressed in buccal mucosa cell and 101 other cell types or tissues"/>
</dbReference>
<dbReference type="InterPro" id="IPR026766">
    <property type="entry name" value="Fam133"/>
</dbReference>
<dbReference type="PANTHER" id="PTHR31911">
    <property type="entry name" value="PROTEIN FAM133"/>
    <property type="match status" value="1"/>
</dbReference>
<dbReference type="PANTHER" id="PTHR31911:SF4">
    <property type="entry name" value="PROTEIN FAM133A"/>
    <property type="match status" value="1"/>
</dbReference>
<keyword id="KW-1267">Proteomics identification</keyword>
<keyword id="KW-1185">Reference proteome</keyword>
<proteinExistence type="evidence at protein level"/>